<sequence length="694" mass="78005">MALLLVSLLAFLSLGSGCHHRVCHCSNRVFLCQESKVTEIPSDLPRNALELRFVLTKLRVIPKGAFSGFGDLEKIEISQNDVLEVIEANVFSNLPKLHEIRIEKANNLLYIDHDAFQNLPNLQYLLISNTGIKHLPAVHKIQSLQKVLLDIQDNINIHTVERNSFMGLSFESTILRLSKNGIQEIHNCAFNGTQLDELNLSYNNNLEELPNDVFQGASGPVILDISGTRIHSLPNYGLENLKKLRARSTYNLKKLPSLEKFVALMEANLTYPSHCCAFANWRRQTSELQTTCNKSILRQEVDMTQARGERVSLAEDDESSYPKGFDMMYSEFEYDLCNEVVDVTCSPKPDAFNPCEDIMGYDILRVLIWFISILAITGNIIVLVILITSQYKLTVPRFLMCNLAFADLCIGIYLLLIASVDIHTKSQYHNYAIDWQTGAGCDAAGFFTVFASELSVYTLTAITLERWHTITHAMQLECKVQLRHAASVMLVGWIFAFAVALLPIFGISTYMKVSICLPMDIDSPLSQLYVMSLLVLNVLAFVVICGCYIHIYLTVRNPNIVSSSSDTKIAKRMAILIFTDFLCMAPISFFAISASLKVPLITVSKSKILLVLFYPINSCANPFLYAIFTKNFRRDFFILLSKFGCYEMQAQLYRTETSSTAHISHPRNGHCPPTPRVINGANCTLVPLSHLAQN</sequence>
<evidence type="ECO:0000250" key="1"/>
<evidence type="ECO:0000250" key="2">
    <source>
        <dbReference type="UniProtKB" id="P20395"/>
    </source>
</evidence>
<evidence type="ECO:0000250" key="3">
    <source>
        <dbReference type="UniProtKB" id="P23945"/>
    </source>
</evidence>
<evidence type="ECO:0000255" key="4"/>
<evidence type="ECO:0000255" key="5">
    <source>
        <dbReference type="PROSITE-ProRule" id="PRU00521"/>
    </source>
</evidence>
<reference key="1">
    <citation type="journal article" date="1994" name="Biochem. Biophys. Res. Commun.">
        <title>Cloning and sequencing of the equine testicular follitropin receptor.</title>
        <authorList>
            <person name="Robert P."/>
            <person name="Amsellem S."/>
            <person name="Christophe S."/>
            <person name="Benifla J.L."/>
            <person name="Bellet D."/>
            <person name="Koman A."/>
            <person name="Bidart J.-M."/>
        </authorList>
    </citation>
    <scope>NUCLEOTIDE SEQUENCE [MRNA]</scope>
    <source>
        <tissue>Testis</tissue>
    </source>
</reference>
<protein>
    <recommendedName>
        <fullName>Follicle-stimulating hormone receptor</fullName>
        <shortName>FSH-R</shortName>
    </recommendedName>
    <alternativeName>
        <fullName>Follitropin receptor</fullName>
    </alternativeName>
</protein>
<comment type="function">
    <text evidence="3">G protein-coupled receptor for follitropin, the follicle-stimulating hormone. Through cAMP production activates the downstream PI3K-AKT and ERK1/ERK2 signaling pathways.</text>
</comment>
<comment type="subunit">
    <text evidence="2 3">Homotrimer. Functions as a homotrimer binding the FSH hormone heterodimer composed of CGA and FSHB (By similarity). Interacts with ARRB2 (By similarity). Interacts with APPL2; interaction is independent of follicle stimulating hormone stimulation (By similarity).</text>
</comment>
<comment type="subcellular location">
    <subcellularLocation>
        <location evidence="3">Cell membrane</location>
        <topology evidence="3">Multi-pass membrane protein</topology>
    </subcellularLocation>
</comment>
<comment type="PTM">
    <text evidence="2">N-glycosylated; indirectly required for FSH-binding, possibly via a conformational change that allows high affinity binding of hormone.</text>
</comment>
<comment type="PTM">
    <text evidence="3">Sulfated.</text>
</comment>
<comment type="similarity">
    <text evidence="5">Belongs to the G-protein coupled receptor 1 family. FSH/LSH/TSH subfamily.</text>
</comment>
<proteinExistence type="evidence at transcript level"/>
<name>FSHR_HORSE</name>
<accession>P47799</accession>
<keyword id="KW-1003">Cell membrane</keyword>
<keyword id="KW-1015">Disulfide bond</keyword>
<keyword id="KW-0297">G-protein coupled receptor</keyword>
<keyword id="KW-0325">Glycoprotein</keyword>
<keyword id="KW-0433">Leucine-rich repeat</keyword>
<keyword id="KW-0472">Membrane</keyword>
<keyword id="KW-0675">Receptor</keyword>
<keyword id="KW-1185">Reference proteome</keyword>
<keyword id="KW-0677">Repeat</keyword>
<keyword id="KW-0732">Signal</keyword>
<keyword id="KW-0765">Sulfation</keyword>
<keyword id="KW-0807">Transducer</keyword>
<keyword id="KW-0812">Transmembrane</keyword>
<keyword id="KW-1133">Transmembrane helix</keyword>
<dbReference type="EMBL" id="S70150">
    <property type="protein sequence ID" value="AAB30854.1"/>
    <property type="molecule type" value="mRNA"/>
</dbReference>
<dbReference type="PIR" id="JC2237">
    <property type="entry name" value="JC2237"/>
</dbReference>
<dbReference type="SMR" id="P47799"/>
<dbReference type="FunCoup" id="P47799">
    <property type="interactions" value="244"/>
</dbReference>
<dbReference type="STRING" id="9796.ENSECAP00000010338"/>
<dbReference type="GlyCosmos" id="P47799">
    <property type="glycosylation" value="4 sites, No reported glycans"/>
</dbReference>
<dbReference type="PaxDb" id="9796-ENSECAP00000010338"/>
<dbReference type="InParanoid" id="P47799"/>
<dbReference type="Proteomes" id="UP000002281">
    <property type="component" value="Unplaced"/>
</dbReference>
<dbReference type="GO" id="GO:0016020">
    <property type="term" value="C:membrane"/>
    <property type="evidence" value="ECO:0000250"/>
    <property type="project" value="UniProtKB"/>
</dbReference>
<dbReference type="GO" id="GO:0005886">
    <property type="term" value="C:plasma membrane"/>
    <property type="evidence" value="ECO:0000250"/>
    <property type="project" value="UniProtKB"/>
</dbReference>
<dbReference type="GO" id="GO:0043235">
    <property type="term" value="C:receptor complex"/>
    <property type="evidence" value="ECO:0000250"/>
    <property type="project" value="UniProtKB"/>
</dbReference>
<dbReference type="GO" id="GO:0004963">
    <property type="term" value="F:follicle-stimulating hormone receptor activity"/>
    <property type="evidence" value="ECO:0000250"/>
    <property type="project" value="UniProtKB"/>
</dbReference>
<dbReference type="GO" id="GO:0008528">
    <property type="term" value="F:G protein-coupled peptide receptor activity"/>
    <property type="evidence" value="ECO:0000318"/>
    <property type="project" value="GO_Central"/>
</dbReference>
<dbReference type="GO" id="GO:0007189">
    <property type="term" value="P:adenylate cyclase-activating G protein-coupled receptor signaling pathway"/>
    <property type="evidence" value="ECO:0000318"/>
    <property type="project" value="GO_Central"/>
</dbReference>
<dbReference type="GO" id="GO:0071372">
    <property type="term" value="P:cellular response to follicle-stimulating hormone stimulus"/>
    <property type="evidence" value="ECO:0000250"/>
    <property type="project" value="UniProtKB"/>
</dbReference>
<dbReference type="GO" id="GO:0042699">
    <property type="term" value="P:follicle-stimulating hormone signaling pathway"/>
    <property type="evidence" value="ECO:0000250"/>
    <property type="project" value="UniProtKB"/>
</dbReference>
<dbReference type="GO" id="GO:0007186">
    <property type="term" value="P:G protein-coupled receptor signaling pathway"/>
    <property type="evidence" value="ECO:0000250"/>
    <property type="project" value="UniProtKB"/>
</dbReference>
<dbReference type="GO" id="GO:0009755">
    <property type="term" value="P:hormone-mediated signaling pathway"/>
    <property type="evidence" value="ECO:0000318"/>
    <property type="project" value="GO_Central"/>
</dbReference>
<dbReference type="GO" id="GO:0008584">
    <property type="term" value="P:male gonad development"/>
    <property type="evidence" value="ECO:0000318"/>
    <property type="project" value="GO_Central"/>
</dbReference>
<dbReference type="GO" id="GO:0070374">
    <property type="term" value="P:positive regulation of ERK1 and ERK2 cascade"/>
    <property type="evidence" value="ECO:0000250"/>
    <property type="project" value="UniProtKB"/>
</dbReference>
<dbReference type="GO" id="GO:0051897">
    <property type="term" value="P:positive regulation of phosphatidylinositol 3-kinase/protein kinase B signal transduction"/>
    <property type="evidence" value="ECO:0000250"/>
    <property type="project" value="UniProtKB"/>
</dbReference>
<dbReference type="GO" id="GO:0010738">
    <property type="term" value="P:regulation of protein kinase A signaling"/>
    <property type="evidence" value="ECO:0000250"/>
    <property type="project" value="UniProtKB"/>
</dbReference>
<dbReference type="CDD" id="cd15360">
    <property type="entry name" value="7tmA_FSH-R"/>
    <property type="match status" value="1"/>
</dbReference>
<dbReference type="FunFam" id="1.20.1070.10:FF:000019">
    <property type="entry name" value="Lutropin-choriogonadotropic hormone receptor"/>
    <property type="match status" value="1"/>
</dbReference>
<dbReference type="Gene3D" id="1.20.1070.10">
    <property type="entry name" value="Rhodopsin 7-helix transmembrane proteins"/>
    <property type="match status" value="1"/>
</dbReference>
<dbReference type="Gene3D" id="3.80.10.10">
    <property type="entry name" value="Ribonuclease Inhibitor"/>
    <property type="match status" value="1"/>
</dbReference>
<dbReference type="InterPro" id="IPR002272">
    <property type="entry name" value="FSH_rcpt"/>
</dbReference>
<dbReference type="InterPro" id="IPR024635">
    <property type="entry name" value="GnHR_TM"/>
</dbReference>
<dbReference type="InterPro" id="IPR000276">
    <property type="entry name" value="GPCR_Rhodpsn"/>
</dbReference>
<dbReference type="InterPro" id="IPR017452">
    <property type="entry name" value="GPCR_Rhodpsn_7TM"/>
</dbReference>
<dbReference type="InterPro" id="IPR002131">
    <property type="entry name" value="Gphrmn_rcpt_fam"/>
</dbReference>
<dbReference type="InterPro" id="IPR001611">
    <property type="entry name" value="Leu-rich_rpt"/>
</dbReference>
<dbReference type="InterPro" id="IPR026906">
    <property type="entry name" value="LRR_5"/>
</dbReference>
<dbReference type="InterPro" id="IPR032675">
    <property type="entry name" value="LRR_dom_sf"/>
</dbReference>
<dbReference type="InterPro" id="IPR000372">
    <property type="entry name" value="LRRNT"/>
</dbReference>
<dbReference type="PANTHER" id="PTHR24372:SF5">
    <property type="entry name" value="FOLLICLE-STIMULATING HORMONE RECEPTOR"/>
    <property type="match status" value="1"/>
</dbReference>
<dbReference type="PANTHER" id="PTHR24372">
    <property type="entry name" value="GLYCOPROTEIN HORMONE RECEPTOR"/>
    <property type="match status" value="1"/>
</dbReference>
<dbReference type="Pfam" id="PF00001">
    <property type="entry name" value="7tm_1"/>
    <property type="match status" value="1"/>
</dbReference>
<dbReference type="Pfam" id="PF12369">
    <property type="entry name" value="GnHR_trans"/>
    <property type="match status" value="1"/>
</dbReference>
<dbReference type="Pfam" id="PF13306">
    <property type="entry name" value="LRR_5"/>
    <property type="match status" value="1"/>
</dbReference>
<dbReference type="Pfam" id="PF13855">
    <property type="entry name" value="LRR_8"/>
    <property type="match status" value="1"/>
</dbReference>
<dbReference type="Pfam" id="PF01462">
    <property type="entry name" value="LRRNT"/>
    <property type="match status" value="1"/>
</dbReference>
<dbReference type="PRINTS" id="PR01143">
    <property type="entry name" value="FSHRECEPTOR"/>
</dbReference>
<dbReference type="PRINTS" id="PR00373">
    <property type="entry name" value="GLYCHORMONER"/>
</dbReference>
<dbReference type="PRINTS" id="PR00237">
    <property type="entry name" value="GPCRRHODOPSN"/>
</dbReference>
<dbReference type="SUPFAM" id="SSF81321">
    <property type="entry name" value="Family A G protein-coupled receptor-like"/>
    <property type="match status" value="1"/>
</dbReference>
<dbReference type="SUPFAM" id="SSF52058">
    <property type="entry name" value="L domain-like"/>
    <property type="match status" value="1"/>
</dbReference>
<dbReference type="PROSITE" id="PS00237">
    <property type="entry name" value="G_PROTEIN_RECEP_F1_1"/>
    <property type="match status" value="1"/>
</dbReference>
<dbReference type="PROSITE" id="PS50262">
    <property type="entry name" value="G_PROTEIN_RECEP_F1_2"/>
    <property type="match status" value="1"/>
</dbReference>
<dbReference type="PROSITE" id="PS51450">
    <property type="entry name" value="LRR"/>
    <property type="match status" value="3"/>
</dbReference>
<gene>
    <name type="primary">FSHR</name>
</gene>
<organism>
    <name type="scientific">Equus caballus</name>
    <name type="common">Horse</name>
    <dbReference type="NCBI Taxonomy" id="9796"/>
    <lineage>
        <taxon>Eukaryota</taxon>
        <taxon>Metazoa</taxon>
        <taxon>Chordata</taxon>
        <taxon>Craniata</taxon>
        <taxon>Vertebrata</taxon>
        <taxon>Euteleostomi</taxon>
        <taxon>Mammalia</taxon>
        <taxon>Eutheria</taxon>
        <taxon>Laurasiatheria</taxon>
        <taxon>Perissodactyla</taxon>
        <taxon>Equidae</taxon>
        <taxon>Equus</taxon>
    </lineage>
</organism>
<feature type="signal peptide" evidence="4">
    <location>
        <begin position="1"/>
        <end position="17"/>
    </location>
</feature>
<feature type="chain" id="PRO_0000012770" description="Follicle-stimulating hormone receptor">
    <location>
        <begin position="18"/>
        <end position="694"/>
    </location>
</feature>
<feature type="topological domain" description="Extracellular" evidence="4">
    <location>
        <begin position="18"/>
        <end position="365"/>
    </location>
</feature>
<feature type="transmembrane region" description="Helical; Name=1" evidence="4">
    <location>
        <begin position="366"/>
        <end position="386"/>
    </location>
</feature>
<feature type="topological domain" description="Cytoplasmic" evidence="4">
    <location>
        <begin position="387"/>
        <end position="397"/>
    </location>
</feature>
<feature type="transmembrane region" description="Helical; Name=2" evidence="4">
    <location>
        <begin position="398"/>
        <end position="420"/>
    </location>
</feature>
<feature type="topological domain" description="Extracellular" evidence="4">
    <location>
        <begin position="421"/>
        <end position="442"/>
    </location>
</feature>
<feature type="transmembrane region" description="Helical; Name=3" evidence="4">
    <location>
        <begin position="443"/>
        <end position="464"/>
    </location>
</feature>
<feature type="topological domain" description="Cytoplasmic" evidence="4">
    <location>
        <begin position="465"/>
        <end position="484"/>
    </location>
</feature>
<feature type="transmembrane region" description="Helical; Name=4" evidence="4">
    <location>
        <begin position="485"/>
        <end position="507"/>
    </location>
</feature>
<feature type="topological domain" description="Extracellular" evidence="4">
    <location>
        <begin position="508"/>
        <end position="527"/>
    </location>
</feature>
<feature type="transmembrane region" description="Helical; Name=5" evidence="4">
    <location>
        <begin position="528"/>
        <end position="549"/>
    </location>
</feature>
<feature type="topological domain" description="Cytoplasmic" evidence="4">
    <location>
        <begin position="550"/>
        <end position="572"/>
    </location>
</feature>
<feature type="transmembrane region" description="Helical; Name=6" evidence="4">
    <location>
        <begin position="573"/>
        <end position="596"/>
    </location>
</feature>
<feature type="topological domain" description="Extracellular" evidence="4">
    <location>
        <begin position="597"/>
        <end position="607"/>
    </location>
</feature>
<feature type="transmembrane region" description="Helical; Name=7" evidence="4">
    <location>
        <begin position="608"/>
        <end position="629"/>
    </location>
</feature>
<feature type="topological domain" description="Cytoplasmic" evidence="4">
    <location>
        <begin position="630"/>
        <end position="694"/>
    </location>
</feature>
<feature type="domain" description="LRRNT">
    <location>
        <begin position="18"/>
        <end position="46"/>
    </location>
</feature>
<feature type="repeat" description="LRR 1">
    <location>
        <begin position="49"/>
        <end position="72"/>
    </location>
</feature>
<feature type="repeat" description="LRR 2">
    <location>
        <begin position="73"/>
        <end position="97"/>
    </location>
</feature>
<feature type="repeat" description="LRR 3">
    <location>
        <begin position="98"/>
        <end position="118"/>
    </location>
</feature>
<feature type="repeat" description="LRR 4">
    <location>
        <begin position="119"/>
        <end position="143"/>
    </location>
</feature>
<feature type="repeat" description="LRR 5">
    <location>
        <begin position="144"/>
        <end position="169"/>
    </location>
</feature>
<feature type="repeat" description="LRR 6">
    <location>
        <begin position="170"/>
        <end position="192"/>
    </location>
</feature>
<feature type="repeat" description="LRR 7">
    <location>
        <begin position="193"/>
        <end position="216"/>
    </location>
</feature>
<feature type="repeat" description="LRR 8">
    <location>
        <begin position="217"/>
        <end position="240"/>
    </location>
</feature>
<feature type="repeat" description="LRR 9">
    <location>
        <begin position="241"/>
        <end position="259"/>
    </location>
</feature>
<feature type="modified residue" description="Sulfotyrosine" evidence="3">
    <location>
        <position position="334"/>
    </location>
</feature>
<feature type="glycosylation site" description="N-linked (GlcNAc...) asparagine" evidence="1">
    <location>
        <position position="191"/>
    </location>
</feature>
<feature type="glycosylation site" description="N-linked (GlcNAc...) asparagine" evidence="4">
    <location>
        <position position="199"/>
    </location>
</feature>
<feature type="glycosylation site" description="N-linked (GlcNAc...) asparagine" evidence="4">
    <location>
        <position position="268"/>
    </location>
</feature>
<feature type="glycosylation site" description="N-linked (GlcNAc...) asparagine" evidence="1">
    <location>
        <position position="293"/>
    </location>
</feature>
<feature type="disulfide bond" evidence="5">
    <location>
        <begin position="18"/>
        <end position="25"/>
    </location>
</feature>
<feature type="disulfide bond" evidence="5">
    <location>
        <begin position="23"/>
        <end position="32"/>
    </location>
</feature>
<feature type="disulfide bond" evidence="3">
    <location>
        <begin position="275"/>
        <end position="345"/>
    </location>
</feature>
<feature type="disulfide bond" evidence="3">
    <location>
        <begin position="276"/>
        <end position="355"/>
    </location>
</feature>
<feature type="disulfide bond" evidence="3">
    <location>
        <begin position="276"/>
        <end position="292"/>
    </location>
</feature>
<feature type="disulfide bond" evidence="3">
    <location>
        <begin position="292"/>
        <end position="337"/>
    </location>
</feature>
<feature type="disulfide bond" evidence="5">
    <location>
        <begin position="441"/>
        <end position="516"/>
    </location>
</feature>